<keyword id="KW-0067">ATP-binding</keyword>
<keyword id="KW-0963">Cytoplasm</keyword>
<keyword id="KW-0235">DNA replication</keyword>
<keyword id="KW-0238">DNA-binding</keyword>
<keyword id="KW-0446">Lipid-binding</keyword>
<keyword id="KW-0547">Nucleotide-binding</keyword>
<organism>
    <name type="scientific">Pseudomonas aeruginosa (strain UCBPP-PA14)</name>
    <dbReference type="NCBI Taxonomy" id="208963"/>
    <lineage>
        <taxon>Bacteria</taxon>
        <taxon>Pseudomonadati</taxon>
        <taxon>Pseudomonadota</taxon>
        <taxon>Gammaproteobacteria</taxon>
        <taxon>Pseudomonadales</taxon>
        <taxon>Pseudomonadaceae</taxon>
        <taxon>Pseudomonas</taxon>
    </lineage>
</organism>
<reference key="1">
    <citation type="journal article" date="2006" name="Genome Biol.">
        <title>Genomic analysis reveals that Pseudomonas aeruginosa virulence is combinatorial.</title>
        <authorList>
            <person name="Lee D.G."/>
            <person name="Urbach J.M."/>
            <person name="Wu G."/>
            <person name="Liberati N.T."/>
            <person name="Feinbaum R.L."/>
            <person name="Miyata S."/>
            <person name="Diggins L.T."/>
            <person name="He J."/>
            <person name="Saucier M."/>
            <person name="Deziel E."/>
            <person name="Friedman L."/>
            <person name="Li L."/>
            <person name="Grills G."/>
            <person name="Montgomery K."/>
            <person name="Kucherlapati R."/>
            <person name="Rahme L.G."/>
            <person name="Ausubel F.M."/>
        </authorList>
    </citation>
    <scope>NUCLEOTIDE SEQUENCE [LARGE SCALE GENOMIC DNA]</scope>
    <source>
        <strain>UCBPP-PA14</strain>
    </source>
</reference>
<dbReference type="EMBL" id="CP000438">
    <property type="protein sequence ID" value="ABJ14957.1"/>
    <property type="molecule type" value="Genomic_DNA"/>
</dbReference>
<dbReference type="RefSeq" id="WP_003109151.1">
    <property type="nucleotide sequence ID" value="NZ_CP034244.1"/>
</dbReference>
<dbReference type="SMR" id="Q02V80"/>
<dbReference type="KEGG" id="pau:PA14_00010"/>
<dbReference type="PseudoCAP" id="PA14_00010"/>
<dbReference type="HOGENOM" id="CLU_026910_0_1_6"/>
<dbReference type="BioCyc" id="PAER208963:G1G74-1-MONOMER"/>
<dbReference type="Proteomes" id="UP000000653">
    <property type="component" value="Chromosome"/>
</dbReference>
<dbReference type="GO" id="GO:0005737">
    <property type="term" value="C:cytoplasm"/>
    <property type="evidence" value="ECO:0007669"/>
    <property type="project" value="UniProtKB-SubCell"/>
</dbReference>
<dbReference type="GO" id="GO:0005886">
    <property type="term" value="C:plasma membrane"/>
    <property type="evidence" value="ECO:0007669"/>
    <property type="project" value="TreeGrafter"/>
</dbReference>
<dbReference type="GO" id="GO:0005524">
    <property type="term" value="F:ATP binding"/>
    <property type="evidence" value="ECO:0007669"/>
    <property type="project" value="UniProtKB-UniRule"/>
</dbReference>
<dbReference type="GO" id="GO:0016887">
    <property type="term" value="F:ATP hydrolysis activity"/>
    <property type="evidence" value="ECO:0007669"/>
    <property type="project" value="InterPro"/>
</dbReference>
<dbReference type="GO" id="GO:0003688">
    <property type="term" value="F:DNA replication origin binding"/>
    <property type="evidence" value="ECO:0007669"/>
    <property type="project" value="UniProtKB-UniRule"/>
</dbReference>
<dbReference type="GO" id="GO:0008289">
    <property type="term" value="F:lipid binding"/>
    <property type="evidence" value="ECO:0007669"/>
    <property type="project" value="UniProtKB-KW"/>
</dbReference>
<dbReference type="GO" id="GO:0006270">
    <property type="term" value="P:DNA replication initiation"/>
    <property type="evidence" value="ECO:0007669"/>
    <property type="project" value="UniProtKB-UniRule"/>
</dbReference>
<dbReference type="GO" id="GO:0006275">
    <property type="term" value="P:regulation of DNA replication"/>
    <property type="evidence" value="ECO:0007669"/>
    <property type="project" value="UniProtKB-UniRule"/>
</dbReference>
<dbReference type="CDD" id="cd00009">
    <property type="entry name" value="AAA"/>
    <property type="match status" value="1"/>
</dbReference>
<dbReference type="CDD" id="cd06571">
    <property type="entry name" value="Bac_DnaA_C"/>
    <property type="match status" value="1"/>
</dbReference>
<dbReference type="FunFam" id="1.10.1750.10:FF:000001">
    <property type="entry name" value="Chromosomal replication initiator protein DnaA"/>
    <property type="match status" value="1"/>
</dbReference>
<dbReference type="FunFam" id="1.10.8.60:FF:000003">
    <property type="entry name" value="Chromosomal replication initiator protein DnaA"/>
    <property type="match status" value="1"/>
</dbReference>
<dbReference type="FunFam" id="3.30.300.180:FF:000001">
    <property type="entry name" value="Chromosomal replication initiator protein DnaA"/>
    <property type="match status" value="1"/>
</dbReference>
<dbReference type="FunFam" id="3.40.50.300:FF:000103">
    <property type="entry name" value="Chromosomal replication initiator protein DnaA"/>
    <property type="match status" value="1"/>
</dbReference>
<dbReference type="Gene3D" id="1.10.1750.10">
    <property type="match status" value="1"/>
</dbReference>
<dbReference type="Gene3D" id="1.10.8.60">
    <property type="match status" value="1"/>
</dbReference>
<dbReference type="Gene3D" id="3.30.300.180">
    <property type="match status" value="1"/>
</dbReference>
<dbReference type="Gene3D" id="3.40.50.300">
    <property type="entry name" value="P-loop containing nucleotide triphosphate hydrolases"/>
    <property type="match status" value="1"/>
</dbReference>
<dbReference type="HAMAP" id="MF_00377">
    <property type="entry name" value="DnaA_bact"/>
    <property type="match status" value="1"/>
</dbReference>
<dbReference type="InterPro" id="IPR003593">
    <property type="entry name" value="AAA+_ATPase"/>
</dbReference>
<dbReference type="InterPro" id="IPR001957">
    <property type="entry name" value="Chromosome_initiator_DnaA"/>
</dbReference>
<dbReference type="InterPro" id="IPR020591">
    <property type="entry name" value="Chromosome_initiator_DnaA-like"/>
</dbReference>
<dbReference type="InterPro" id="IPR018312">
    <property type="entry name" value="Chromosome_initiator_DnaA_CS"/>
</dbReference>
<dbReference type="InterPro" id="IPR013159">
    <property type="entry name" value="DnaA_C"/>
</dbReference>
<dbReference type="InterPro" id="IPR013317">
    <property type="entry name" value="DnaA_dom"/>
</dbReference>
<dbReference type="InterPro" id="IPR024633">
    <property type="entry name" value="DnaA_N_dom"/>
</dbReference>
<dbReference type="InterPro" id="IPR038454">
    <property type="entry name" value="DnaA_N_sf"/>
</dbReference>
<dbReference type="InterPro" id="IPR027417">
    <property type="entry name" value="P-loop_NTPase"/>
</dbReference>
<dbReference type="InterPro" id="IPR010921">
    <property type="entry name" value="Trp_repressor/repl_initiator"/>
</dbReference>
<dbReference type="NCBIfam" id="TIGR00362">
    <property type="entry name" value="DnaA"/>
    <property type="match status" value="1"/>
</dbReference>
<dbReference type="PANTHER" id="PTHR30050">
    <property type="entry name" value="CHROMOSOMAL REPLICATION INITIATOR PROTEIN DNAA"/>
    <property type="match status" value="1"/>
</dbReference>
<dbReference type="PANTHER" id="PTHR30050:SF2">
    <property type="entry name" value="CHROMOSOMAL REPLICATION INITIATOR PROTEIN DNAA"/>
    <property type="match status" value="1"/>
</dbReference>
<dbReference type="Pfam" id="PF00308">
    <property type="entry name" value="Bac_DnaA"/>
    <property type="match status" value="1"/>
</dbReference>
<dbReference type="Pfam" id="PF08299">
    <property type="entry name" value="Bac_DnaA_C"/>
    <property type="match status" value="1"/>
</dbReference>
<dbReference type="Pfam" id="PF11638">
    <property type="entry name" value="DnaA_N"/>
    <property type="match status" value="1"/>
</dbReference>
<dbReference type="PRINTS" id="PR00051">
    <property type="entry name" value="DNAA"/>
</dbReference>
<dbReference type="SMART" id="SM00382">
    <property type="entry name" value="AAA"/>
    <property type="match status" value="1"/>
</dbReference>
<dbReference type="SMART" id="SM00760">
    <property type="entry name" value="Bac_DnaA_C"/>
    <property type="match status" value="1"/>
</dbReference>
<dbReference type="SUPFAM" id="SSF52540">
    <property type="entry name" value="P-loop containing nucleoside triphosphate hydrolases"/>
    <property type="match status" value="1"/>
</dbReference>
<dbReference type="SUPFAM" id="SSF48295">
    <property type="entry name" value="TrpR-like"/>
    <property type="match status" value="1"/>
</dbReference>
<dbReference type="PROSITE" id="PS01008">
    <property type="entry name" value="DNAA"/>
    <property type="match status" value="1"/>
</dbReference>
<gene>
    <name evidence="1" type="primary">dnaA</name>
    <name type="ordered locus">PA14_00010</name>
</gene>
<feature type="chain" id="PRO_1000048692" description="Chromosomal replication initiator protein DnaA">
    <location>
        <begin position="1"/>
        <end position="514"/>
    </location>
</feature>
<feature type="region of interest" description="Domain I, interacts with DnaA modulators" evidence="1">
    <location>
        <begin position="1"/>
        <end position="90"/>
    </location>
</feature>
<feature type="region of interest" description="Domain II" evidence="1">
    <location>
        <begin position="91"/>
        <end position="177"/>
    </location>
</feature>
<feature type="region of interest" description="Domain III, AAA+ region" evidence="1">
    <location>
        <begin position="178"/>
        <end position="394"/>
    </location>
</feature>
<feature type="region of interest" description="Domain IV, binds dsDNA" evidence="1">
    <location>
        <begin position="395"/>
        <end position="514"/>
    </location>
</feature>
<feature type="binding site" evidence="1">
    <location>
        <position position="222"/>
    </location>
    <ligand>
        <name>ATP</name>
        <dbReference type="ChEBI" id="CHEBI:30616"/>
    </ligand>
</feature>
<feature type="binding site" evidence="1">
    <location>
        <position position="224"/>
    </location>
    <ligand>
        <name>ATP</name>
        <dbReference type="ChEBI" id="CHEBI:30616"/>
    </ligand>
</feature>
<feature type="binding site" evidence="1">
    <location>
        <position position="225"/>
    </location>
    <ligand>
        <name>ATP</name>
        <dbReference type="ChEBI" id="CHEBI:30616"/>
    </ligand>
</feature>
<feature type="binding site" evidence="1">
    <location>
        <position position="226"/>
    </location>
    <ligand>
        <name>ATP</name>
        <dbReference type="ChEBI" id="CHEBI:30616"/>
    </ligand>
</feature>
<comment type="function">
    <text evidence="1">Plays an essential role in the initiation and regulation of chromosomal replication. ATP-DnaA binds to the origin of replication (oriC) to initiate formation of the DNA replication initiation complex once per cell cycle. Binds the DnaA box (a 9 base pair repeat at the origin) and separates the double-stranded (ds)DNA. Forms a right-handed helical filament on oriC DNA; dsDNA binds to the exterior of the filament while single-stranded (ss)DNA is stabiized in the filament's interior. The ATP-DnaA-oriC complex binds and stabilizes one strand of the AT-rich DNA unwinding element (DUE), permitting loading of DNA polymerase. After initiation quickly degrades to an ADP-DnaA complex that is not apt for DNA replication. Binds acidic phospholipids.</text>
</comment>
<comment type="subunit">
    <text evidence="1">Oligomerizes as a right-handed, spiral filament on DNA at oriC.</text>
</comment>
<comment type="subcellular location">
    <subcellularLocation>
        <location evidence="1">Cytoplasm</location>
    </subcellularLocation>
</comment>
<comment type="domain">
    <text evidence="1">Domain I is involved in oligomerization and binding regulators, domain II is flexibile and of varying length in different bacteria, domain III forms the AAA+ region, while domain IV binds dsDNA.</text>
</comment>
<comment type="similarity">
    <text evidence="1">Belongs to the DnaA family.</text>
</comment>
<name>DNAA_PSEAB</name>
<sequence length="514" mass="57754">MSVELWQQCVDLLRDELPSQQFNTWIRPLQVEAEGDELRVYAPNRFVLDWVNEKYLGRLLELLGERGEGQLPALSLLIGSKRSRTPRAAIVPSQTHVAPPPPVAPPPAPVQPVSAAPVVVPREELPPVTTAPSVSSDPYEPEEPSIDPLAAAMPAGAAPAVRTERNVQVEGALKHTSYLNRTFTFENFVEGKSNQLARAAAWQVADNLKHGYNPLFLYGGVGLGKTHLMHAVGNHLLKKNPNAKVVYLHSERFVADMVKALQLNAINEFKRFYRSVDALLIDDIQFFARKERSQEEFFHTFNALLEGGQQVILTSDRYPKEIEGLEERLKSRFGWGLTVAVEPPELETRVAILMKKAEQAKIELPHDAAFFIAQRIRSNVRELEGALKRVIAHSHFMGRPITIELIRESLKDLLALQDKLVSIDNIQRTVAEYYKIKISDLLSKRRSRSVARPRQVAMALSKELTNHSLPEIGVAFGGRDHTTVLHACRKIAQLRESDADIREDYKNLLRTLTT</sequence>
<proteinExistence type="inferred from homology"/>
<protein>
    <recommendedName>
        <fullName evidence="1">Chromosomal replication initiator protein DnaA</fullName>
    </recommendedName>
</protein>
<evidence type="ECO:0000255" key="1">
    <source>
        <dbReference type="HAMAP-Rule" id="MF_00377"/>
    </source>
</evidence>
<accession>Q02V80</accession>